<organism>
    <name type="scientific">Oryza sativa subsp. japonica</name>
    <name type="common">Rice</name>
    <dbReference type="NCBI Taxonomy" id="39947"/>
    <lineage>
        <taxon>Eukaryota</taxon>
        <taxon>Viridiplantae</taxon>
        <taxon>Streptophyta</taxon>
        <taxon>Embryophyta</taxon>
        <taxon>Tracheophyta</taxon>
        <taxon>Spermatophyta</taxon>
        <taxon>Magnoliopsida</taxon>
        <taxon>Liliopsida</taxon>
        <taxon>Poales</taxon>
        <taxon>Poaceae</taxon>
        <taxon>BOP clade</taxon>
        <taxon>Oryzoideae</taxon>
        <taxon>Oryzeae</taxon>
        <taxon>Oryzinae</taxon>
        <taxon>Oryza</taxon>
        <taxon>Oryza sativa</taxon>
    </lineage>
</organism>
<gene>
    <name type="primary">CSLE1</name>
    <name type="ordered locus">Os09g0478100</name>
    <name type="ordered locus">LOC_Os09g30120</name>
    <name type="ORF">OsJ_028602</name>
    <name type="ORF">P0556A05.31-1</name>
    <name type="ORF">P0556A05.31-2</name>
</gene>
<evidence type="ECO:0000255" key="1"/>
<evidence type="ECO:0000303" key="2">
    <source>
    </source>
</evidence>
<evidence type="ECO:0000305" key="3"/>
<comment type="function">
    <text>Thought to be a Golgi-localized beta-glycan synthase that polymerize the backbones of noncellulosic polysaccharides (hemicelluloses) of plant cell wall.</text>
</comment>
<comment type="subcellular location">
    <subcellularLocation>
        <location evidence="3">Golgi apparatus membrane</location>
        <topology evidence="3">Multi-pass membrane protein</topology>
    </subcellularLocation>
</comment>
<comment type="alternative products">
    <event type="alternative splicing"/>
    <isoform>
        <id>Q651X7-1</id>
        <name>1</name>
        <sequence type="displayed"/>
    </isoform>
    <isoform>
        <id>Q651X7-2</id>
        <name>2</name>
        <sequence type="described" ref="VSP_031474"/>
    </isoform>
</comment>
<comment type="similarity">
    <text evidence="3">Belongs to the glycosyltransferase 2 family. Plant cellulose synthase-like E subfamily.</text>
</comment>
<comment type="sequence caution" evidence="3">
    <conflict type="erroneous gene model prediction">
        <sequence resource="EMBL-CDS" id="AAL25129"/>
    </conflict>
</comment>
<sequence>METTAAATAAERRRPLFTTEELGGRAVYRVQAATVAAGILLVLYYRATRVPAAGEGRAAWLGMAAAELWFAVYWVIAQSVRWRPFRRRTFRDRLAERYEQNLPGVDIFVCTADPQSEPPSLVISTILSVMAYNYPSEKISVYLSDDGGSILTFYALWEASIFAKKWLPFCKRYNIEPRSPAAYFSESKVHHNLCIPKEWALIKNLYEEMRERIDTATMSGKIPEEMKLKHKGFDEWNSDFTLKNHQPIVQILIDGKNRNAIDDDRNVLPTMVYVAREKRPQYHHNFKAGALNALIRVSSVISDSPVILNVDCDMYSNNSDSIRDALCFFLDEEMGQKIGFVQYPQIFNNMTQNDIYGNSFNVSYHVEMCGLDSVGGCLYIGTGCFHRREILCGRIFSKDYKENWNRGIKERGKENINEIEEKATSLVTCTYEHRTQWGNDIGVKYGFPAEDIITGLAIHCRGWESAFINPKRAAFLGLAPSTLAQNILQHKRWSEGNLTIFLSKYCSFLFGHGKIKLQLQMGYCICGLWAANSLPTLYYVVIPSLGLVKGTPLFPQIMSPWATPFIYVFCVKTLYGLYEALLSGDTLKGWWNGQRMWMVKSITSYLYGFIDTIRKCVGMSKMSFEVTAKVSGHDEAKRYEQEILEFGSSSPEYVIIATVALLNFVCLVGGLSQIMAGVWNMPWNVFLPQAILCGMIVIINMPIYEAMFLRKDNGRIPTAVTLASIGFVMLAFLVPIV</sequence>
<keyword id="KW-0025">Alternative splicing</keyword>
<keyword id="KW-0961">Cell wall biogenesis/degradation</keyword>
<keyword id="KW-0328">Glycosyltransferase</keyword>
<keyword id="KW-0333">Golgi apparatus</keyword>
<keyword id="KW-0472">Membrane</keyword>
<keyword id="KW-1185">Reference proteome</keyword>
<keyword id="KW-0808">Transferase</keyword>
<keyword id="KW-0812">Transmembrane</keyword>
<keyword id="KW-1133">Transmembrane helix</keyword>
<feature type="chain" id="PRO_0000319398" description="Cellulose synthase-like protein E1">
    <location>
        <begin position="1"/>
        <end position="737"/>
    </location>
</feature>
<feature type="transmembrane region" description="Helical" evidence="1">
    <location>
        <begin position="26"/>
        <end position="45"/>
    </location>
</feature>
<feature type="transmembrane region" description="Helical" evidence="1">
    <location>
        <begin position="58"/>
        <end position="78"/>
    </location>
</feature>
<feature type="transmembrane region" description="Helical" evidence="1">
    <location>
        <begin position="528"/>
        <end position="548"/>
    </location>
</feature>
<feature type="transmembrane region" description="Helical" evidence="1">
    <location>
        <begin position="551"/>
        <end position="571"/>
    </location>
</feature>
<feature type="transmembrane region" description="Helical" evidence="1">
    <location>
        <begin position="654"/>
        <end position="674"/>
    </location>
</feature>
<feature type="transmembrane region" description="Helical" evidence="1">
    <location>
        <begin position="683"/>
        <end position="703"/>
    </location>
</feature>
<feature type="transmembrane region" description="Helical" evidence="1">
    <location>
        <begin position="716"/>
        <end position="736"/>
    </location>
</feature>
<feature type="active site" evidence="1">
    <location>
        <position position="146"/>
    </location>
</feature>
<feature type="active site" evidence="1">
    <location>
        <position position="451"/>
    </location>
</feature>
<feature type="splice variant" id="VSP_031474" description="In isoform 2." evidence="2">
    <location>
        <begin position="1"/>
        <end position="129"/>
    </location>
</feature>
<feature type="sequence conflict" description="In Ref. 6; AK102766." evidence="3" ref="6">
    <original>N</original>
    <variation>D</variation>
    <location>
        <position position="204"/>
    </location>
</feature>
<feature type="sequence conflict" description="In Ref. 6; AK102766." evidence="3" ref="6">
    <original>I</original>
    <variation>M</variation>
    <location>
        <position position="295"/>
    </location>
</feature>
<feature type="sequence conflict" description="In Ref. 6; AK102766." evidence="3" ref="6">
    <original>A</original>
    <variation>V</variation>
    <location>
        <position position="530"/>
    </location>
</feature>
<feature type="sequence conflict" description="In Ref. 1; AAL38532." evidence="3" ref="1">
    <original>E</original>
    <variation>Q</variation>
    <location>
        <position position="635"/>
    </location>
</feature>
<reference key="1">
    <citation type="journal article" date="2002" name="Plant Physiol.">
        <title>Cellulose synthase-like genes of rice.</title>
        <authorList>
            <person name="Hazen S.P."/>
            <person name="Scott-Craig J.S."/>
            <person name="Walton J.D."/>
        </authorList>
    </citation>
    <scope>NUCLEOTIDE SEQUENCE [GENOMIC DNA]</scope>
    <scope>NUCLEOTIDE SEQUENCE [MRNA] OF 419-737</scope>
</reference>
<reference key="2">
    <citation type="journal article" date="2005" name="Nature">
        <title>The map-based sequence of the rice genome.</title>
        <authorList>
            <consortium name="International rice genome sequencing project (IRGSP)"/>
        </authorList>
    </citation>
    <scope>NUCLEOTIDE SEQUENCE [LARGE SCALE GENOMIC DNA]</scope>
    <source>
        <strain>cv. Nipponbare</strain>
    </source>
</reference>
<reference key="3">
    <citation type="journal article" date="2008" name="Nucleic Acids Res.">
        <title>The rice annotation project database (RAP-DB): 2008 update.</title>
        <authorList>
            <consortium name="The rice annotation project (RAP)"/>
        </authorList>
    </citation>
    <scope>GENOME REANNOTATION</scope>
    <source>
        <strain>cv. Nipponbare</strain>
    </source>
</reference>
<reference key="4">
    <citation type="journal article" date="2013" name="Rice">
        <title>Improvement of the Oryza sativa Nipponbare reference genome using next generation sequence and optical map data.</title>
        <authorList>
            <person name="Kawahara Y."/>
            <person name="de la Bastide M."/>
            <person name="Hamilton J.P."/>
            <person name="Kanamori H."/>
            <person name="McCombie W.R."/>
            <person name="Ouyang S."/>
            <person name="Schwartz D.C."/>
            <person name="Tanaka T."/>
            <person name="Wu J."/>
            <person name="Zhou S."/>
            <person name="Childs K.L."/>
            <person name="Davidson R.M."/>
            <person name="Lin H."/>
            <person name="Quesada-Ocampo L."/>
            <person name="Vaillancourt B."/>
            <person name="Sakai H."/>
            <person name="Lee S.S."/>
            <person name="Kim J."/>
            <person name="Numa H."/>
            <person name="Itoh T."/>
            <person name="Buell C.R."/>
            <person name="Matsumoto T."/>
        </authorList>
    </citation>
    <scope>GENOME REANNOTATION</scope>
    <source>
        <strain>cv. Nipponbare</strain>
    </source>
</reference>
<reference key="5">
    <citation type="journal article" date="2005" name="PLoS Biol.">
        <title>The genomes of Oryza sativa: a history of duplications.</title>
        <authorList>
            <person name="Yu J."/>
            <person name="Wang J."/>
            <person name="Lin W."/>
            <person name="Li S."/>
            <person name="Li H."/>
            <person name="Zhou J."/>
            <person name="Ni P."/>
            <person name="Dong W."/>
            <person name="Hu S."/>
            <person name="Zeng C."/>
            <person name="Zhang J."/>
            <person name="Zhang Y."/>
            <person name="Li R."/>
            <person name="Xu Z."/>
            <person name="Li S."/>
            <person name="Li X."/>
            <person name="Zheng H."/>
            <person name="Cong L."/>
            <person name="Lin L."/>
            <person name="Yin J."/>
            <person name="Geng J."/>
            <person name="Li G."/>
            <person name="Shi J."/>
            <person name="Liu J."/>
            <person name="Lv H."/>
            <person name="Li J."/>
            <person name="Wang J."/>
            <person name="Deng Y."/>
            <person name="Ran L."/>
            <person name="Shi X."/>
            <person name="Wang X."/>
            <person name="Wu Q."/>
            <person name="Li C."/>
            <person name="Ren X."/>
            <person name="Wang J."/>
            <person name="Wang X."/>
            <person name="Li D."/>
            <person name="Liu D."/>
            <person name="Zhang X."/>
            <person name="Ji Z."/>
            <person name="Zhao W."/>
            <person name="Sun Y."/>
            <person name="Zhang Z."/>
            <person name="Bao J."/>
            <person name="Han Y."/>
            <person name="Dong L."/>
            <person name="Ji J."/>
            <person name="Chen P."/>
            <person name="Wu S."/>
            <person name="Liu J."/>
            <person name="Xiao Y."/>
            <person name="Bu D."/>
            <person name="Tan J."/>
            <person name="Yang L."/>
            <person name="Ye C."/>
            <person name="Zhang J."/>
            <person name="Xu J."/>
            <person name="Zhou Y."/>
            <person name="Yu Y."/>
            <person name="Zhang B."/>
            <person name="Zhuang S."/>
            <person name="Wei H."/>
            <person name="Liu B."/>
            <person name="Lei M."/>
            <person name="Yu H."/>
            <person name="Li Y."/>
            <person name="Xu H."/>
            <person name="Wei S."/>
            <person name="He X."/>
            <person name="Fang L."/>
            <person name="Zhang Z."/>
            <person name="Zhang Y."/>
            <person name="Huang X."/>
            <person name="Su Z."/>
            <person name="Tong W."/>
            <person name="Li J."/>
            <person name="Tong Z."/>
            <person name="Li S."/>
            <person name="Ye J."/>
            <person name="Wang L."/>
            <person name="Fang L."/>
            <person name="Lei T."/>
            <person name="Chen C.-S."/>
            <person name="Chen H.-C."/>
            <person name="Xu Z."/>
            <person name="Li H."/>
            <person name="Huang H."/>
            <person name="Zhang F."/>
            <person name="Xu H."/>
            <person name="Li N."/>
            <person name="Zhao C."/>
            <person name="Li S."/>
            <person name="Dong L."/>
            <person name="Huang Y."/>
            <person name="Li L."/>
            <person name="Xi Y."/>
            <person name="Qi Q."/>
            <person name="Li W."/>
            <person name="Zhang B."/>
            <person name="Hu W."/>
            <person name="Zhang Y."/>
            <person name="Tian X."/>
            <person name="Jiao Y."/>
            <person name="Liang X."/>
            <person name="Jin J."/>
            <person name="Gao L."/>
            <person name="Zheng W."/>
            <person name="Hao B."/>
            <person name="Liu S.-M."/>
            <person name="Wang W."/>
            <person name="Yuan L."/>
            <person name="Cao M."/>
            <person name="McDermott J."/>
            <person name="Samudrala R."/>
            <person name="Wang J."/>
            <person name="Wong G.K.-S."/>
            <person name="Yang H."/>
        </authorList>
    </citation>
    <scope>NUCLEOTIDE SEQUENCE [LARGE SCALE GENOMIC DNA]</scope>
    <source>
        <strain>cv. Nipponbare</strain>
    </source>
</reference>
<reference key="6">
    <citation type="journal article" date="2003" name="Science">
        <title>Collection, mapping, and annotation of over 28,000 cDNA clones from japonica rice.</title>
        <authorList>
            <consortium name="The rice full-length cDNA consortium"/>
        </authorList>
    </citation>
    <scope>NUCLEOTIDE SEQUENCE [LARGE SCALE MRNA] (ISOFORMS 1 AND 2)</scope>
    <source>
        <strain>cv. Nipponbare</strain>
    </source>
</reference>
<protein>
    <recommendedName>
        <fullName>Cellulose synthase-like protein E1</fullName>
        <ecNumber>2.4.1.-</ecNumber>
    </recommendedName>
    <alternativeName>
        <fullName>OsCslE1</fullName>
    </alternativeName>
</protein>
<name>CSLE1_ORYSJ</name>
<dbReference type="EC" id="2.4.1.-"/>
<dbReference type="EMBL" id="AF432500">
    <property type="protein sequence ID" value="AAL25129.1"/>
    <property type="status" value="ALT_SEQ"/>
    <property type="molecule type" value="Genomic_DNA"/>
</dbReference>
<dbReference type="EMBL" id="AF435647">
    <property type="protein sequence ID" value="AAL38532.1"/>
    <property type="molecule type" value="mRNA"/>
</dbReference>
<dbReference type="EMBL" id="AP005759">
    <property type="protein sequence ID" value="BAD46389.1"/>
    <property type="molecule type" value="Genomic_DNA"/>
</dbReference>
<dbReference type="EMBL" id="AP005759">
    <property type="protein sequence ID" value="BAD46390.1"/>
    <property type="molecule type" value="Genomic_DNA"/>
</dbReference>
<dbReference type="EMBL" id="AP008215">
    <property type="protein sequence ID" value="BAF25383.1"/>
    <property type="molecule type" value="Genomic_DNA"/>
</dbReference>
<dbReference type="EMBL" id="AP014965">
    <property type="protein sequence ID" value="BAT08614.1"/>
    <property type="molecule type" value="Genomic_DNA"/>
</dbReference>
<dbReference type="EMBL" id="CM000146">
    <property type="protein sequence ID" value="EAZ45119.1"/>
    <property type="molecule type" value="Genomic_DNA"/>
</dbReference>
<dbReference type="EMBL" id="AK102766">
    <property type="status" value="NOT_ANNOTATED_CDS"/>
    <property type="molecule type" value="mRNA"/>
</dbReference>
<dbReference type="EMBL" id="AK103810">
    <property type="status" value="NOT_ANNOTATED_CDS"/>
    <property type="molecule type" value="mRNA"/>
</dbReference>
<dbReference type="RefSeq" id="XP_015611685.1">
    <property type="nucleotide sequence ID" value="XM_015756199.1"/>
</dbReference>
<dbReference type="RefSeq" id="XP_015611687.1">
    <property type="nucleotide sequence ID" value="XM_015756201.1"/>
</dbReference>
<dbReference type="SMR" id="Q651X7"/>
<dbReference type="FunCoup" id="Q651X7">
    <property type="interactions" value="158"/>
</dbReference>
<dbReference type="STRING" id="39947.Q651X7"/>
<dbReference type="CAZy" id="GT2">
    <property type="family name" value="Glycosyltransferase Family 2"/>
</dbReference>
<dbReference type="PaxDb" id="39947-Q651X7"/>
<dbReference type="EnsemblPlants" id="Os09t0478100-01">
    <molecule id="Q651X7-1"/>
    <property type="protein sequence ID" value="Os09t0478100-01"/>
    <property type="gene ID" value="Os09g0478100"/>
</dbReference>
<dbReference type="Gramene" id="Os09t0478100-01">
    <molecule id="Q651X7-1"/>
    <property type="protein sequence ID" value="Os09t0478100-01"/>
    <property type="gene ID" value="Os09g0478100"/>
</dbReference>
<dbReference type="KEGG" id="dosa:Os09g0478100"/>
<dbReference type="eggNOG" id="ENOG502QS7H">
    <property type="taxonomic scope" value="Eukaryota"/>
</dbReference>
<dbReference type="InParanoid" id="Q651X7"/>
<dbReference type="OMA" id="QAFRWNL"/>
<dbReference type="OrthoDB" id="72851at2759"/>
<dbReference type="Proteomes" id="UP000000763">
    <property type="component" value="Chromosome 9"/>
</dbReference>
<dbReference type="Proteomes" id="UP000007752">
    <property type="component" value="Chromosome 9"/>
</dbReference>
<dbReference type="Proteomes" id="UP000059680">
    <property type="component" value="Chromosome 9"/>
</dbReference>
<dbReference type="ExpressionAtlas" id="Q651X7">
    <property type="expression patterns" value="baseline and differential"/>
</dbReference>
<dbReference type="GO" id="GO:0000139">
    <property type="term" value="C:Golgi membrane"/>
    <property type="evidence" value="ECO:0007669"/>
    <property type="project" value="UniProtKB-SubCell"/>
</dbReference>
<dbReference type="GO" id="GO:0005886">
    <property type="term" value="C:plasma membrane"/>
    <property type="evidence" value="ECO:0000318"/>
    <property type="project" value="GO_Central"/>
</dbReference>
<dbReference type="GO" id="GO:0016760">
    <property type="term" value="F:cellulose synthase (UDP-forming) activity"/>
    <property type="evidence" value="ECO:0007669"/>
    <property type="project" value="InterPro"/>
</dbReference>
<dbReference type="GO" id="GO:0016759">
    <property type="term" value="F:cellulose synthase activity"/>
    <property type="evidence" value="ECO:0000318"/>
    <property type="project" value="GO_Central"/>
</dbReference>
<dbReference type="GO" id="GO:0071555">
    <property type="term" value="P:cell wall organization"/>
    <property type="evidence" value="ECO:0007669"/>
    <property type="project" value="UniProtKB-KW"/>
</dbReference>
<dbReference type="GO" id="GO:0030244">
    <property type="term" value="P:cellulose biosynthetic process"/>
    <property type="evidence" value="ECO:0000318"/>
    <property type="project" value="GO_Central"/>
</dbReference>
<dbReference type="GO" id="GO:0009833">
    <property type="term" value="P:plant-type primary cell wall biogenesis"/>
    <property type="evidence" value="ECO:0000318"/>
    <property type="project" value="GO_Central"/>
</dbReference>
<dbReference type="FunFam" id="3.90.550.10:FF:000138">
    <property type="entry name" value="Cellulose synthase isolog"/>
    <property type="match status" value="1"/>
</dbReference>
<dbReference type="FunFam" id="3.90.550.10:FF:000112">
    <property type="entry name" value="Cellulose synthase-like protein E1"/>
    <property type="match status" value="1"/>
</dbReference>
<dbReference type="Gene3D" id="3.90.550.10">
    <property type="entry name" value="Spore Coat Polysaccharide Biosynthesis Protein SpsA, Chain A"/>
    <property type="match status" value="1"/>
</dbReference>
<dbReference type="InterPro" id="IPR005150">
    <property type="entry name" value="Cellulose_synth"/>
</dbReference>
<dbReference type="InterPro" id="IPR029044">
    <property type="entry name" value="Nucleotide-diphossugar_trans"/>
</dbReference>
<dbReference type="PANTHER" id="PTHR13301">
    <property type="entry name" value="X-BOX TRANSCRIPTION FACTOR-RELATED"/>
    <property type="match status" value="1"/>
</dbReference>
<dbReference type="Pfam" id="PF03552">
    <property type="entry name" value="Cellulose_synt"/>
    <property type="match status" value="2"/>
</dbReference>
<accession>Q651X7</accession>
<accession>A0A0P0XNI3</accession>
<accession>Q651X8</accession>
<accession>Q8W1N2</accession>
<accession>Q944E4</accession>
<proteinExistence type="evidence at transcript level"/>